<protein>
    <recommendedName>
        <fullName evidence="1">UDP-N-acetylmuramoyl-L-alanyl-D-glutamate--2,6-diaminopimelate ligase</fullName>
        <ecNumber evidence="1">6.3.2.13</ecNumber>
    </recommendedName>
    <alternativeName>
        <fullName evidence="1">Meso-A2pm-adding enzyme</fullName>
    </alternativeName>
    <alternativeName>
        <fullName evidence="1">Meso-diaminopimelate-adding enzyme</fullName>
    </alternativeName>
    <alternativeName>
        <fullName evidence="1">UDP-MurNAc-L-Ala-D-Glu:meso-diaminopimelate ligase</fullName>
    </alternativeName>
    <alternativeName>
        <fullName evidence="1">UDP-MurNAc-tripeptide synthetase</fullName>
    </alternativeName>
    <alternativeName>
        <fullName evidence="1">UDP-N-acetylmuramyl-tripeptide synthetase</fullName>
    </alternativeName>
</protein>
<sequence>MKLNDIIQGLDIINVKGELNIDINNVQYDSRKVTKGTLFICIKGFVSDGHKYIKDAIEKGASAFIVEEDVAIKGCTFIKVKDTRKDMAKVADNFYNHPSQKFNVIGVTGTNGKTSITTILNEILTLNKNKVGLIGTIKIFDGEKDIVSNSTTPESIDLQYHFNNMLDNGCDYCAMEVSSHSLALNRVDETDFKLGIFTNLTPDHLDFHKDLEDYRKAKEKLFFKTTMANIINIDDEGGKKIYENIKGINVPCYTYGVDTKADFMARDIKSDSDGVSYRLITPSYEEVIFIPVPGMFTVYNTLAVIAACYVLGIPKPIYKEGLRLSNGVSGRFETVPNDKGISVIVDYAHTPDALENVLKTTQQFAEGKIISVFGCGGDRDTEKRPLMGAIGQKYSDLCIITSDNPRTEEPEAIIKDILEGIDKKKENYHVVVDREQAIAEAISMAKKDDVVIITGKGHETYQIIGKVKHHFDDKEVANECLSKM</sequence>
<name>MURE_CLOD6</name>
<dbReference type="EC" id="6.3.2.13" evidence="1"/>
<dbReference type="EMBL" id="AM180355">
    <property type="protein sequence ID" value="CAJ69550.1"/>
    <property type="molecule type" value="Genomic_DNA"/>
</dbReference>
<dbReference type="RefSeq" id="WP_011861629.1">
    <property type="nucleotide sequence ID" value="NC_009089.1"/>
</dbReference>
<dbReference type="RefSeq" id="YP_001089175.1">
    <property type="nucleotide sequence ID" value="NC_009089.1"/>
</dbReference>
<dbReference type="SMR" id="Q182Z8"/>
<dbReference type="STRING" id="272563.CD630_26640"/>
<dbReference type="EnsemblBacteria" id="CAJ69550">
    <property type="protein sequence ID" value="CAJ69550"/>
    <property type="gene ID" value="CD630_26640"/>
</dbReference>
<dbReference type="KEGG" id="cdf:CD630_26640"/>
<dbReference type="KEGG" id="pdc:CDIF630_02918"/>
<dbReference type="PATRIC" id="fig|272563.120.peg.2807"/>
<dbReference type="eggNOG" id="COG0769">
    <property type="taxonomic scope" value="Bacteria"/>
</dbReference>
<dbReference type="OrthoDB" id="9800958at2"/>
<dbReference type="PhylomeDB" id="Q182Z8"/>
<dbReference type="BioCyc" id="PDIF272563:G12WB-2815-MONOMER"/>
<dbReference type="UniPathway" id="UPA00219"/>
<dbReference type="Proteomes" id="UP000001978">
    <property type="component" value="Chromosome"/>
</dbReference>
<dbReference type="GO" id="GO:0005737">
    <property type="term" value="C:cytoplasm"/>
    <property type="evidence" value="ECO:0007669"/>
    <property type="project" value="UniProtKB-SubCell"/>
</dbReference>
<dbReference type="GO" id="GO:0005524">
    <property type="term" value="F:ATP binding"/>
    <property type="evidence" value="ECO:0007669"/>
    <property type="project" value="UniProtKB-UniRule"/>
</dbReference>
<dbReference type="GO" id="GO:0000287">
    <property type="term" value="F:magnesium ion binding"/>
    <property type="evidence" value="ECO:0007669"/>
    <property type="project" value="UniProtKB-UniRule"/>
</dbReference>
<dbReference type="GO" id="GO:0008765">
    <property type="term" value="F:UDP-N-acetylmuramoylalanyl-D-glutamate-2,6-diaminopimelate ligase activity"/>
    <property type="evidence" value="ECO:0007669"/>
    <property type="project" value="UniProtKB-UniRule"/>
</dbReference>
<dbReference type="GO" id="GO:0051301">
    <property type="term" value="P:cell division"/>
    <property type="evidence" value="ECO:0007669"/>
    <property type="project" value="UniProtKB-KW"/>
</dbReference>
<dbReference type="GO" id="GO:0071555">
    <property type="term" value="P:cell wall organization"/>
    <property type="evidence" value="ECO:0007669"/>
    <property type="project" value="UniProtKB-KW"/>
</dbReference>
<dbReference type="GO" id="GO:0009252">
    <property type="term" value="P:peptidoglycan biosynthetic process"/>
    <property type="evidence" value="ECO:0007669"/>
    <property type="project" value="UniProtKB-UniRule"/>
</dbReference>
<dbReference type="GO" id="GO:0008360">
    <property type="term" value="P:regulation of cell shape"/>
    <property type="evidence" value="ECO:0007669"/>
    <property type="project" value="UniProtKB-KW"/>
</dbReference>
<dbReference type="FunFam" id="3.90.190.20:FF:000006">
    <property type="entry name" value="UDP-N-acetylmuramoyl-L-alanyl-D-glutamate--2,6-diaminopimelate ligase"/>
    <property type="match status" value="1"/>
</dbReference>
<dbReference type="Gene3D" id="3.90.190.20">
    <property type="entry name" value="Mur ligase, C-terminal domain"/>
    <property type="match status" value="1"/>
</dbReference>
<dbReference type="Gene3D" id="3.40.1190.10">
    <property type="entry name" value="Mur-like, catalytic domain"/>
    <property type="match status" value="1"/>
</dbReference>
<dbReference type="Gene3D" id="3.40.1390.10">
    <property type="entry name" value="MurE/MurF, N-terminal domain"/>
    <property type="match status" value="1"/>
</dbReference>
<dbReference type="HAMAP" id="MF_00208">
    <property type="entry name" value="MurE"/>
    <property type="match status" value="1"/>
</dbReference>
<dbReference type="InterPro" id="IPR036565">
    <property type="entry name" value="Mur-like_cat_sf"/>
</dbReference>
<dbReference type="InterPro" id="IPR004101">
    <property type="entry name" value="Mur_ligase_C"/>
</dbReference>
<dbReference type="InterPro" id="IPR036615">
    <property type="entry name" value="Mur_ligase_C_dom_sf"/>
</dbReference>
<dbReference type="InterPro" id="IPR013221">
    <property type="entry name" value="Mur_ligase_cen"/>
</dbReference>
<dbReference type="InterPro" id="IPR000713">
    <property type="entry name" value="Mur_ligase_N"/>
</dbReference>
<dbReference type="InterPro" id="IPR035911">
    <property type="entry name" value="MurE/MurF_N"/>
</dbReference>
<dbReference type="InterPro" id="IPR005761">
    <property type="entry name" value="UDP-N-AcMur-Glu-dNH2Pim_ligase"/>
</dbReference>
<dbReference type="NCBIfam" id="TIGR01085">
    <property type="entry name" value="murE"/>
    <property type="match status" value="1"/>
</dbReference>
<dbReference type="NCBIfam" id="NF001124">
    <property type="entry name" value="PRK00139.1-2"/>
    <property type="match status" value="1"/>
</dbReference>
<dbReference type="NCBIfam" id="NF001126">
    <property type="entry name" value="PRK00139.1-4"/>
    <property type="match status" value="1"/>
</dbReference>
<dbReference type="PANTHER" id="PTHR23135">
    <property type="entry name" value="MUR LIGASE FAMILY MEMBER"/>
    <property type="match status" value="1"/>
</dbReference>
<dbReference type="PANTHER" id="PTHR23135:SF4">
    <property type="entry name" value="UDP-N-ACETYLMURAMOYL-L-ALANYL-D-GLUTAMATE--2,6-DIAMINOPIMELATE LIGASE MURE HOMOLOG, CHLOROPLASTIC"/>
    <property type="match status" value="1"/>
</dbReference>
<dbReference type="Pfam" id="PF01225">
    <property type="entry name" value="Mur_ligase"/>
    <property type="match status" value="1"/>
</dbReference>
<dbReference type="Pfam" id="PF02875">
    <property type="entry name" value="Mur_ligase_C"/>
    <property type="match status" value="1"/>
</dbReference>
<dbReference type="Pfam" id="PF08245">
    <property type="entry name" value="Mur_ligase_M"/>
    <property type="match status" value="1"/>
</dbReference>
<dbReference type="SUPFAM" id="SSF53623">
    <property type="entry name" value="MurD-like peptide ligases, catalytic domain"/>
    <property type="match status" value="1"/>
</dbReference>
<dbReference type="SUPFAM" id="SSF53244">
    <property type="entry name" value="MurD-like peptide ligases, peptide-binding domain"/>
    <property type="match status" value="1"/>
</dbReference>
<dbReference type="SUPFAM" id="SSF63418">
    <property type="entry name" value="MurE/MurF N-terminal domain"/>
    <property type="match status" value="1"/>
</dbReference>
<reference key="1">
    <citation type="journal article" date="2006" name="Nat. Genet.">
        <title>The multidrug-resistant human pathogen Clostridium difficile has a highly mobile, mosaic genome.</title>
        <authorList>
            <person name="Sebaihia M."/>
            <person name="Wren B.W."/>
            <person name="Mullany P."/>
            <person name="Fairweather N.F."/>
            <person name="Minton N."/>
            <person name="Stabler R."/>
            <person name="Thomson N.R."/>
            <person name="Roberts A.P."/>
            <person name="Cerdeno-Tarraga A.M."/>
            <person name="Wang H."/>
            <person name="Holden M.T.G."/>
            <person name="Wright A."/>
            <person name="Churcher C."/>
            <person name="Quail M.A."/>
            <person name="Baker S."/>
            <person name="Bason N."/>
            <person name="Brooks K."/>
            <person name="Chillingworth T."/>
            <person name="Cronin A."/>
            <person name="Davis P."/>
            <person name="Dowd L."/>
            <person name="Fraser A."/>
            <person name="Feltwell T."/>
            <person name="Hance Z."/>
            <person name="Holroyd S."/>
            <person name="Jagels K."/>
            <person name="Moule S."/>
            <person name="Mungall K."/>
            <person name="Price C."/>
            <person name="Rabbinowitsch E."/>
            <person name="Sharp S."/>
            <person name="Simmonds M."/>
            <person name="Stevens K."/>
            <person name="Unwin L."/>
            <person name="Whithead S."/>
            <person name="Dupuy B."/>
            <person name="Dougan G."/>
            <person name="Barrell B."/>
            <person name="Parkhill J."/>
        </authorList>
    </citation>
    <scope>NUCLEOTIDE SEQUENCE [LARGE SCALE GENOMIC DNA]</scope>
    <source>
        <strain>630</strain>
    </source>
</reference>
<accession>Q182Z8</accession>
<gene>
    <name evidence="1" type="primary">murE</name>
    <name type="ordered locus">CD630_26640</name>
</gene>
<evidence type="ECO:0000255" key="1">
    <source>
        <dbReference type="HAMAP-Rule" id="MF_00208"/>
    </source>
</evidence>
<feature type="chain" id="PRO_1000012349" description="UDP-N-acetylmuramoyl-L-alanyl-D-glutamate--2,6-diaminopimelate ligase">
    <location>
        <begin position="1"/>
        <end position="484"/>
    </location>
</feature>
<feature type="short sequence motif" description="Meso-diaminopimelate recognition motif">
    <location>
        <begin position="403"/>
        <end position="406"/>
    </location>
</feature>
<feature type="binding site" evidence="1">
    <location>
        <position position="30"/>
    </location>
    <ligand>
        <name>UDP-N-acetyl-alpha-D-muramoyl-L-alanyl-D-glutamate</name>
        <dbReference type="ChEBI" id="CHEBI:83900"/>
    </ligand>
</feature>
<feature type="binding site" evidence="1">
    <location>
        <begin position="109"/>
        <end position="115"/>
    </location>
    <ligand>
        <name>ATP</name>
        <dbReference type="ChEBI" id="CHEBI:30616"/>
    </ligand>
</feature>
<feature type="binding site" evidence="1">
    <location>
        <begin position="151"/>
        <end position="152"/>
    </location>
    <ligand>
        <name>UDP-N-acetyl-alpha-D-muramoyl-L-alanyl-D-glutamate</name>
        <dbReference type="ChEBI" id="CHEBI:83900"/>
    </ligand>
</feature>
<feature type="binding site" evidence="1">
    <location>
        <position position="178"/>
    </location>
    <ligand>
        <name>UDP-N-acetyl-alpha-D-muramoyl-L-alanyl-D-glutamate</name>
        <dbReference type="ChEBI" id="CHEBI:83900"/>
    </ligand>
</feature>
<feature type="binding site" evidence="1">
    <location>
        <position position="186"/>
    </location>
    <ligand>
        <name>UDP-N-acetyl-alpha-D-muramoyl-L-alanyl-D-glutamate</name>
        <dbReference type="ChEBI" id="CHEBI:83900"/>
    </ligand>
</feature>
<feature type="binding site" evidence="1">
    <location>
        <position position="379"/>
    </location>
    <ligand>
        <name>meso-2,6-diaminopimelate</name>
        <dbReference type="ChEBI" id="CHEBI:57791"/>
    </ligand>
</feature>
<feature type="binding site" evidence="1">
    <location>
        <begin position="403"/>
        <end position="406"/>
    </location>
    <ligand>
        <name>meso-2,6-diaminopimelate</name>
        <dbReference type="ChEBI" id="CHEBI:57791"/>
    </ligand>
</feature>
<feature type="binding site" evidence="1">
    <location>
        <position position="455"/>
    </location>
    <ligand>
        <name>meso-2,6-diaminopimelate</name>
        <dbReference type="ChEBI" id="CHEBI:57791"/>
    </ligand>
</feature>
<feature type="binding site" evidence="1">
    <location>
        <position position="459"/>
    </location>
    <ligand>
        <name>meso-2,6-diaminopimelate</name>
        <dbReference type="ChEBI" id="CHEBI:57791"/>
    </ligand>
</feature>
<feature type="modified residue" description="N6-carboxylysine" evidence="1">
    <location>
        <position position="218"/>
    </location>
</feature>
<proteinExistence type="inferred from homology"/>
<keyword id="KW-0067">ATP-binding</keyword>
<keyword id="KW-0131">Cell cycle</keyword>
<keyword id="KW-0132">Cell division</keyword>
<keyword id="KW-0133">Cell shape</keyword>
<keyword id="KW-0961">Cell wall biogenesis/degradation</keyword>
<keyword id="KW-0963">Cytoplasm</keyword>
<keyword id="KW-0436">Ligase</keyword>
<keyword id="KW-0460">Magnesium</keyword>
<keyword id="KW-0547">Nucleotide-binding</keyword>
<keyword id="KW-0573">Peptidoglycan synthesis</keyword>
<keyword id="KW-1185">Reference proteome</keyword>
<comment type="function">
    <text evidence="1">Catalyzes the addition of meso-diaminopimelic acid to the nucleotide precursor UDP-N-acetylmuramoyl-L-alanyl-D-glutamate (UMAG) in the biosynthesis of bacterial cell-wall peptidoglycan.</text>
</comment>
<comment type="catalytic activity">
    <reaction evidence="1">
        <text>UDP-N-acetyl-alpha-D-muramoyl-L-alanyl-D-glutamate + meso-2,6-diaminopimelate + ATP = UDP-N-acetyl-alpha-D-muramoyl-L-alanyl-gamma-D-glutamyl-meso-2,6-diaminopimelate + ADP + phosphate + H(+)</text>
        <dbReference type="Rhea" id="RHEA:23676"/>
        <dbReference type="ChEBI" id="CHEBI:15378"/>
        <dbReference type="ChEBI" id="CHEBI:30616"/>
        <dbReference type="ChEBI" id="CHEBI:43474"/>
        <dbReference type="ChEBI" id="CHEBI:57791"/>
        <dbReference type="ChEBI" id="CHEBI:83900"/>
        <dbReference type="ChEBI" id="CHEBI:83905"/>
        <dbReference type="ChEBI" id="CHEBI:456216"/>
        <dbReference type="EC" id="6.3.2.13"/>
    </reaction>
</comment>
<comment type="cofactor">
    <cofactor evidence="1">
        <name>Mg(2+)</name>
        <dbReference type="ChEBI" id="CHEBI:18420"/>
    </cofactor>
</comment>
<comment type="pathway">
    <text evidence="1">Cell wall biogenesis; peptidoglycan biosynthesis.</text>
</comment>
<comment type="subcellular location">
    <subcellularLocation>
        <location evidence="1">Cytoplasm</location>
    </subcellularLocation>
</comment>
<comment type="PTM">
    <text evidence="1">Carboxylation is probably crucial for Mg(2+) binding and, consequently, for the gamma-phosphate positioning of ATP.</text>
</comment>
<comment type="similarity">
    <text evidence="1">Belongs to the MurCDEF family. MurE subfamily.</text>
</comment>
<organism>
    <name type="scientific">Clostridioides difficile (strain 630)</name>
    <name type="common">Peptoclostridium difficile</name>
    <dbReference type="NCBI Taxonomy" id="272563"/>
    <lineage>
        <taxon>Bacteria</taxon>
        <taxon>Bacillati</taxon>
        <taxon>Bacillota</taxon>
        <taxon>Clostridia</taxon>
        <taxon>Peptostreptococcales</taxon>
        <taxon>Peptostreptococcaceae</taxon>
        <taxon>Clostridioides</taxon>
    </lineage>
</organism>